<comment type="catalytic activity">
    <reaction>
        <text>tRNA(Gly) + glycine + ATP = glycyl-tRNA(Gly) + AMP + diphosphate</text>
        <dbReference type="Rhea" id="RHEA:16013"/>
        <dbReference type="Rhea" id="RHEA-COMP:9664"/>
        <dbReference type="Rhea" id="RHEA-COMP:9683"/>
        <dbReference type="ChEBI" id="CHEBI:30616"/>
        <dbReference type="ChEBI" id="CHEBI:33019"/>
        <dbReference type="ChEBI" id="CHEBI:57305"/>
        <dbReference type="ChEBI" id="CHEBI:78442"/>
        <dbReference type="ChEBI" id="CHEBI:78522"/>
        <dbReference type="ChEBI" id="CHEBI:456215"/>
        <dbReference type="EC" id="6.1.1.14"/>
    </reaction>
</comment>
<comment type="subunit">
    <text evidence="1">Tetramer of two alpha and two beta subunits.</text>
</comment>
<comment type="subcellular location">
    <subcellularLocation>
        <location evidence="1">Cytoplasm</location>
    </subcellularLocation>
</comment>
<comment type="similarity">
    <text evidence="2">Belongs to the class-II aminoacyl-tRNA synthetase family.</text>
</comment>
<evidence type="ECO:0000250" key="1"/>
<evidence type="ECO:0000305" key="2"/>
<name>SYGB_AQUAE</name>
<organism>
    <name type="scientific">Aquifex aeolicus (strain VF5)</name>
    <dbReference type="NCBI Taxonomy" id="224324"/>
    <lineage>
        <taxon>Bacteria</taxon>
        <taxon>Pseudomonadati</taxon>
        <taxon>Aquificota</taxon>
        <taxon>Aquificia</taxon>
        <taxon>Aquificales</taxon>
        <taxon>Aquificaceae</taxon>
        <taxon>Aquifex</taxon>
    </lineage>
</organism>
<reference key="1">
    <citation type="journal article" date="1998" name="Nature">
        <title>The complete genome of the hyperthermophilic bacterium Aquifex aeolicus.</title>
        <authorList>
            <person name="Deckert G."/>
            <person name="Warren P.V."/>
            <person name="Gaasterland T."/>
            <person name="Young W.G."/>
            <person name="Lenox A.L."/>
            <person name="Graham D.E."/>
            <person name="Overbeek R."/>
            <person name="Snead M.A."/>
            <person name="Keller M."/>
            <person name="Aujay M."/>
            <person name="Huber R."/>
            <person name="Feldman R.A."/>
            <person name="Short J.M."/>
            <person name="Olsen G.J."/>
            <person name="Swanson R.V."/>
        </authorList>
    </citation>
    <scope>NUCLEOTIDE SEQUENCE [LARGE SCALE GENOMIC DNA]</scope>
    <source>
        <strain>VF5</strain>
    </source>
</reference>
<sequence>MTNELLIEIGTEELPAGVINPALDYLKDKINSLLNARQVKTYGTPRRLTLYFKDFENERKEKKEVIWGPPKNVAYDEKGNPTKALEGFLKKNNASLEEVKVLKKDKGEYVAIVRKVIEKSPIEKLQEEFEEILLSVPFPKRMRWTSSKRITFSRPVRWILALFNGQVLKLRFGELESSNKTYGHRFLSKGEVTINNPADYEKTLKEHYVIPDFNERKEIILRALEKSSQEVGGKPSYPEGLVEEVTNLVEYPFPVLGKFDEKYLELPPLVITTVAAHHQRFFCFEKDGKLLNYFLGISNNKPNEKIKEGYEKVLRARLEDALFFYREDLKKDLKSLIPELKKVLFHPKVGSMYEKEERMEKIAQKLCPLLKCEWEKVKEAVWLSKVDLLTEMVKELDELQGYMGYVYAKAQGYDEEVAKALWEQYFPRSLEDKVPETTTGTILSLSDKIDNLYSFFKAGEIPKGSSDPYGLRRSAFGIIKIVDVKNLDLNLEDFKEIYGEFKQYPKLVEFLKQRLISYLEDYPVDIVRAVLNVYSPMEPYKVINSVRVLYEASKSPEFPSVVEAAKRVIRIIPKDWKNYEVDEKLLSEEAERELYQKLTEFENKELKSPLELLPLKEYIDKFFDNVKVMAEDEKIRNNRISLLKRVENLFRTFGDFNEIVIKEG</sequence>
<proteinExistence type="inferred from homology"/>
<keyword id="KW-0030">Aminoacyl-tRNA synthetase</keyword>
<keyword id="KW-0067">ATP-binding</keyword>
<keyword id="KW-0963">Cytoplasm</keyword>
<keyword id="KW-0436">Ligase</keyword>
<keyword id="KW-0547">Nucleotide-binding</keyword>
<keyword id="KW-0648">Protein biosynthesis</keyword>
<keyword id="KW-1185">Reference proteome</keyword>
<feature type="chain" id="PRO_0000072892" description="Glycine--tRNA ligase beta subunit">
    <location>
        <begin position="1"/>
        <end position="664"/>
    </location>
</feature>
<accession>O67898</accession>
<dbReference type="EC" id="6.1.1.14"/>
<dbReference type="EMBL" id="AE000657">
    <property type="protein sequence ID" value="AAC07870.1"/>
    <property type="molecule type" value="Genomic_DNA"/>
</dbReference>
<dbReference type="PIR" id="F70483">
    <property type="entry name" value="F70483"/>
</dbReference>
<dbReference type="RefSeq" id="NP_214467.1">
    <property type="nucleotide sequence ID" value="NC_000918.1"/>
</dbReference>
<dbReference type="RefSeq" id="WP_010881403.1">
    <property type="nucleotide sequence ID" value="NC_000918.1"/>
</dbReference>
<dbReference type="SMR" id="O67898"/>
<dbReference type="FunCoup" id="O67898">
    <property type="interactions" value="439"/>
</dbReference>
<dbReference type="STRING" id="224324.aq_2141"/>
<dbReference type="EnsemblBacteria" id="AAC07870">
    <property type="protein sequence ID" value="AAC07870"/>
    <property type="gene ID" value="aq_2141"/>
</dbReference>
<dbReference type="KEGG" id="aae:aq_2141"/>
<dbReference type="PATRIC" id="fig|224324.8.peg.1655"/>
<dbReference type="eggNOG" id="COG0751">
    <property type="taxonomic scope" value="Bacteria"/>
</dbReference>
<dbReference type="HOGENOM" id="CLU_007220_2_2_0"/>
<dbReference type="InParanoid" id="O67898"/>
<dbReference type="OrthoDB" id="9775440at2"/>
<dbReference type="Proteomes" id="UP000000798">
    <property type="component" value="Chromosome"/>
</dbReference>
<dbReference type="GO" id="GO:0005829">
    <property type="term" value="C:cytosol"/>
    <property type="evidence" value="ECO:0000318"/>
    <property type="project" value="GO_Central"/>
</dbReference>
<dbReference type="GO" id="GO:0004814">
    <property type="term" value="F:arginine-tRNA ligase activity"/>
    <property type="evidence" value="ECO:0007669"/>
    <property type="project" value="InterPro"/>
</dbReference>
<dbReference type="GO" id="GO:0005524">
    <property type="term" value="F:ATP binding"/>
    <property type="evidence" value="ECO:0007669"/>
    <property type="project" value="UniProtKB-UniRule"/>
</dbReference>
<dbReference type="GO" id="GO:0004820">
    <property type="term" value="F:glycine-tRNA ligase activity"/>
    <property type="evidence" value="ECO:0007669"/>
    <property type="project" value="UniProtKB-UniRule"/>
</dbReference>
<dbReference type="GO" id="GO:0006420">
    <property type="term" value="P:arginyl-tRNA aminoacylation"/>
    <property type="evidence" value="ECO:0007669"/>
    <property type="project" value="InterPro"/>
</dbReference>
<dbReference type="GO" id="GO:0006426">
    <property type="term" value="P:glycyl-tRNA aminoacylation"/>
    <property type="evidence" value="ECO:0007669"/>
    <property type="project" value="UniProtKB-UniRule"/>
</dbReference>
<dbReference type="HAMAP" id="MF_00255">
    <property type="entry name" value="Gly_tRNA_synth_beta"/>
    <property type="match status" value="1"/>
</dbReference>
<dbReference type="InterPro" id="IPR008909">
    <property type="entry name" value="DALR_anticod-bd"/>
</dbReference>
<dbReference type="InterPro" id="IPR015944">
    <property type="entry name" value="Gly-tRNA-synth_bsu"/>
</dbReference>
<dbReference type="InterPro" id="IPR006194">
    <property type="entry name" value="Gly-tRNA-synth_heterodimer"/>
</dbReference>
<dbReference type="NCBIfam" id="TIGR00211">
    <property type="entry name" value="glyS"/>
    <property type="match status" value="1"/>
</dbReference>
<dbReference type="PANTHER" id="PTHR30075:SF2">
    <property type="entry name" value="GLYCINE--TRNA LIGASE, CHLOROPLASTIC_MITOCHONDRIAL 2"/>
    <property type="match status" value="1"/>
</dbReference>
<dbReference type="PANTHER" id="PTHR30075">
    <property type="entry name" value="GLYCYL-TRNA SYNTHETASE"/>
    <property type="match status" value="1"/>
</dbReference>
<dbReference type="Pfam" id="PF05746">
    <property type="entry name" value="DALR_1"/>
    <property type="match status" value="1"/>
</dbReference>
<dbReference type="Pfam" id="PF02092">
    <property type="entry name" value="tRNA_synt_2f"/>
    <property type="match status" value="1"/>
</dbReference>
<dbReference type="PRINTS" id="PR01045">
    <property type="entry name" value="TRNASYNTHGB"/>
</dbReference>
<dbReference type="SUPFAM" id="SSF109604">
    <property type="entry name" value="HD-domain/PDEase-like"/>
    <property type="match status" value="1"/>
</dbReference>
<dbReference type="PROSITE" id="PS50861">
    <property type="entry name" value="AA_TRNA_LIGASE_II_GLYAB"/>
    <property type="match status" value="1"/>
</dbReference>
<gene>
    <name type="primary">glyS</name>
    <name type="ordered locus">aq_2141</name>
</gene>
<protein>
    <recommendedName>
        <fullName>Glycine--tRNA ligase beta subunit</fullName>
        <ecNumber>6.1.1.14</ecNumber>
    </recommendedName>
    <alternativeName>
        <fullName>Glycyl-tRNA synthetase beta subunit</fullName>
        <shortName>GlyRS</shortName>
    </alternativeName>
</protein>